<proteinExistence type="evidence at transcript level"/>
<name>FADF_BACSU</name>
<organism>
    <name type="scientific">Bacillus subtilis (strain 168)</name>
    <dbReference type="NCBI Taxonomy" id="224308"/>
    <lineage>
        <taxon>Bacteria</taxon>
        <taxon>Bacillati</taxon>
        <taxon>Bacillota</taxon>
        <taxon>Bacilli</taxon>
        <taxon>Bacillales</taxon>
        <taxon>Bacillaceae</taxon>
        <taxon>Bacillus</taxon>
    </lineage>
</organism>
<sequence>MSGFLIANALLFLIVTAYAVYLFVYLVKTRLAYIKLGQKEQFDQRFKERLHAIWVNVFGQKKLLKDKKSGIIHVMFFYGFILVQFGAIDFIIKGLAPGRNLSLGPVYPAFTFFQEIVTFLILIAVGWAFYRRYIEKLVRLKRGFKAGLVLIFIGGLMLTVLLGNGMNLIWHEHGLSWSEPIASGIAFMLSGVGKTGAAVIFYIAWWIHLLFLLSFLVYVPQSKHAHLIAGPANVFFNRMESAGKLEKIDFTDETKESYGAGKIEDFRQSQLLDLYACVECGRCTNMCPATGTGKMLSPMDLILRLRDHLTEKGAAVTSRSPWVPAAAFRHTRGNQLAAASAGSGSQEAAAALDYNPSLIGDVITEEEIWACTTCRNCEDQCPVMNEHVDKIIDLRRYLVLTEGKMDSDAQRAMTSIERQGNPWGLNRKERENWRDEAPDAEIPTVKEMKKEGKEFEYLFWVGSMGSYDNRSQKIAISFAKLLNHAGVSFAILGNKEKNSGDTPRRLGNEFLFQELAEKNISEFEKNDVKKIVTIDPHAYNLFKNEYPDFGFEGEVYHHTEVLAELVKNGKLRPQHPLHETITFHDSCYLGRYNEVYDPPREILKAIPGVQLVEMERSRETGMCCGAGGGLMWMEEETGNRINVARTEQALAVNPSVISSGCPYCLTMLGDGTKAKEAEDQVKTYDVVELLAQSVLGADLKMGEKQ</sequence>
<comment type="cofactor">
    <cofactor evidence="2">
        <name>[4Fe-4S] cluster</name>
        <dbReference type="ChEBI" id="CHEBI:49883"/>
    </cofactor>
    <text evidence="2">Binds 2 [4Fe-4S] clusters.</text>
</comment>
<comment type="subcellular location">
    <subcellularLocation>
        <location evidence="1">Cell membrane</location>
        <topology evidence="1">Multi-pass membrane protein</topology>
    </subcellularLocation>
</comment>
<comment type="induction">
    <text evidence="3">Repressed by FadR in the absence of LCFAs (fatty acids of 14-20 carbon atoms). When LCFAs are present in the medium, they are converted to long-chain acyl-CoAs, which antagonize FadR as to its binding to FadR boxes on target DNA and thus derepress transcription.</text>
</comment>
<feature type="chain" id="PRO_0000049977" description="Probable iron-sulfur-binding oxidoreductase FadF">
    <location>
        <begin position="1"/>
        <end position="705"/>
    </location>
</feature>
<feature type="transmembrane region" description="Helical" evidence="1">
    <location>
        <begin position="4"/>
        <end position="24"/>
    </location>
</feature>
<feature type="transmembrane region" description="Helical" evidence="1">
    <location>
        <begin position="71"/>
        <end position="91"/>
    </location>
</feature>
<feature type="transmembrane region" description="Helical" evidence="1">
    <location>
        <begin position="109"/>
        <end position="129"/>
    </location>
</feature>
<feature type="transmembrane region" description="Helical" evidence="1">
    <location>
        <begin position="146"/>
        <end position="166"/>
    </location>
</feature>
<feature type="transmembrane region" description="Helical" evidence="1">
    <location>
        <begin position="173"/>
        <end position="193"/>
    </location>
</feature>
<feature type="transmembrane region" description="Helical" evidence="1">
    <location>
        <begin position="199"/>
        <end position="219"/>
    </location>
</feature>
<feature type="domain" description="4Fe-4S ferredoxin-type 1" evidence="2">
    <location>
        <begin position="268"/>
        <end position="298"/>
    </location>
</feature>
<feature type="domain" description="4Fe-4S ferredoxin-type 2" evidence="2">
    <location>
        <begin position="360"/>
        <end position="391"/>
    </location>
</feature>
<feature type="binding site" evidence="2">
    <location>
        <position position="277"/>
    </location>
    <ligand>
        <name>[4Fe-4S] cluster</name>
        <dbReference type="ChEBI" id="CHEBI:49883"/>
        <label>1</label>
    </ligand>
</feature>
<feature type="binding site" evidence="2">
    <location>
        <position position="280"/>
    </location>
    <ligand>
        <name>[4Fe-4S] cluster</name>
        <dbReference type="ChEBI" id="CHEBI:49883"/>
        <label>1</label>
    </ligand>
</feature>
<feature type="binding site" evidence="2">
    <location>
        <position position="283"/>
    </location>
    <ligand>
        <name>[4Fe-4S] cluster</name>
        <dbReference type="ChEBI" id="CHEBI:49883"/>
        <label>1</label>
    </ligand>
</feature>
<feature type="binding site" evidence="2">
    <location>
        <position position="287"/>
    </location>
    <ligand>
        <name>[4Fe-4S] cluster</name>
        <dbReference type="ChEBI" id="CHEBI:49883"/>
        <label>2</label>
    </ligand>
</feature>
<feature type="binding site" evidence="2">
    <location>
        <position position="371"/>
    </location>
    <ligand>
        <name>[4Fe-4S] cluster</name>
        <dbReference type="ChEBI" id="CHEBI:49883"/>
        <label>2</label>
    </ligand>
</feature>
<feature type="binding site" evidence="2">
    <location>
        <position position="374"/>
    </location>
    <ligand>
        <name>[4Fe-4S] cluster</name>
        <dbReference type="ChEBI" id="CHEBI:49883"/>
        <label>2</label>
    </ligand>
</feature>
<feature type="binding site" evidence="2">
    <location>
        <position position="377"/>
    </location>
    <ligand>
        <name>[4Fe-4S] cluster</name>
        <dbReference type="ChEBI" id="CHEBI:49883"/>
        <label>2</label>
    </ligand>
</feature>
<feature type="binding site" evidence="2">
    <location>
        <position position="381"/>
    </location>
    <ligand>
        <name>[4Fe-4S] cluster</name>
        <dbReference type="ChEBI" id="CHEBI:49883"/>
        <label>1</label>
    </ligand>
</feature>
<dbReference type="EC" id="1.-.-.-" evidence="4"/>
<dbReference type="EMBL" id="Z49782">
    <property type="protein sequence ID" value="CAA89867.1"/>
    <property type="molecule type" value="Genomic_DNA"/>
</dbReference>
<dbReference type="EMBL" id="AL009126">
    <property type="protein sequence ID" value="CAB15746.1"/>
    <property type="molecule type" value="Genomic_DNA"/>
</dbReference>
<dbReference type="PIR" id="S55420">
    <property type="entry name" value="S55420"/>
</dbReference>
<dbReference type="RefSeq" id="NP_391599.1">
    <property type="nucleotide sequence ID" value="NC_000964.3"/>
</dbReference>
<dbReference type="RefSeq" id="WP_003244084.1">
    <property type="nucleotide sequence ID" value="NZ_OZ025638.1"/>
</dbReference>
<dbReference type="FunCoup" id="P45866">
    <property type="interactions" value="41"/>
</dbReference>
<dbReference type="IntAct" id="P45866">
    <property type="interactions" value="1"/>
</dbReference>
<dbReference type="STRING" id="224308.BSU37180"/>
<dbReference type="PaxDb" id="224308-BSU37180"/>
<dbReference type="EnsemblBacteria" id="CAB15746">
    <property type="protein sequence ID" value="CAB15746"/>
    <property type="gene ID" value="BSU_37180"/>
</dbReference>
<dbReference type="GeneID" id="938461"/>
<dbReference type="KEGG" id="bsu:BSU37180"/>
<dbReference type="PATRIC" id="fig|224308.179.peg.4028"/>
<dbReference type="eggNOG" id="COG0247">
    <property type="taxonomic scope" value="Bacteria"/>
</dbReference>
<dbReference type="eggNOG" id="COG2181">
    <property type="taxonomic scope" value="Bacteria"/>
</dbReference>
<dbReference type="InParanoid" id="P45866"/>
<dbReference type="OrthoDB" id="9794954at2"/>
<dbReference type="PhylomeDB" id="P45866"/>
<dbReference type="BioCyc" id="BSUB:BSU37180-MONOMER"/>
<dbReference type="Proteomes" id="UP000001570">
    <property type="component" value="Chromosome"/>
</dbReference>
<dbReference type="GO" id="GO:0005886">
    <property type="term" value="C:plasma membrane"/>
    <property type="evidence" value="ECO:0007669"/>
    <property type="project" value="UniProtKB-SubCell"/>
</dbReference>
<dbReference type="GO" id="GO:0051539">
    <property type="term" value="F:4 iron, 4 sulfur cluster binding"/>
    <property type="evidence" value="ECO:0007669"/>
    <property type="project" value="UniProtKB-KW"/>
</dbReference>
<dbReference type="GO" id="GO:0046872">
    <property type="term" value="F:metal ion binding"/>
    <property type="evidence" value="ECO:0007669"/>
    <property type="project" value="UniProtKB-KW"/>
</dbReference>
<dbReference type="GO" id="GO:0016491">
    <property type="term" value="F:oxidoreductase activity"/>
    <property type="evidence" value="ECO:0007669"/>
    <property type="project" value="UniProtKB-KW"/>
</dbReference>
<dbReference type="Gene3D" id="1.10.1060.10">
    <property type="entry name" value="Alpha-helical ferredoxin"/>
    <property type="match status" value="1"/>
</dbReference>
<dbReference type="Gene3D" id="1.20.950.20">
    <property type="entry name" value="Transmembrane di-heme cytochromes, Chain C"/>
    <property type="match status" value="1"/>
</dbReference>
<dbReference type="InterPro" id="IPR017896">
    <property type="entry name" value="4Fe4S_Fe-S-bd"/>
</dbReference>
<dbReference type="InterPro" id="IPR017900">
    <property type="entry name" value="4Fe4S_Fe_S_CS"/>
</dbReference>
<dbReference type="InterPro" id="IPR004017">
    <property type="entry name" value="Cys_rich_dom"/>
</dbReference>
<dbReference type="InterPro" id="IPR051460">
    <property type="entry name" value="HdrC_iron-sulfur_subunit"/>
</dbReference>
<dbReference type="InterPro" id="IPR009051">
    <property type="entry name" value="Helical_ferredxn"/>
</dbReference>
<dbReference type="InterPro" id="IPR036197">
    <property type="entry name" value="NarG-like_sf"/>
</dbReference>
<dbReference type="PANTHER" id="PTHR43255:SF1">
    <property type="entry name" value="IRON-SULFUR-BINDING OXIDOREDUCTASE FADF-RELATED"/>
    <property type="match status" value="1"/>
</dbReference>
<dbReference type="PANTHER" id="PTHR43255">
    <property type="entry name" value="IRON-SULFUR-BINDING OXIDOREDUCTASE FADF-RELATED-RELATED"/>
    <property type="match status" value="1"/>
</dbReference>
<dbReference type="Pfam" id="PF02754">
    <property type="entry name" value="CCG"/>
    <property type="match status" value="2"/>
</dbReference>
<dbReference type="Pfam" id="PF13183">
    <property type="entry name" value="Fer4_8"/>
    <property type="match status" value="1"/>
</dbReference>
<dbReference type="SUPFAM" id="SSF46548">
    <property type="entry name" value="alpha-helical ferredoxin"/>
    <property type="match status" value="1"/>
</dbReference>
<dbReference type="SUPFAM" id="SSF103501">
    <property type="entry name" value="Respiratory nitrate reductase 1 gamma chain"/>
    <property type="match status" value="1"/>
</dbReference>
<dbReference type="PROSITE" id="PS00198">
    <property type="entry name" value="4FE4S_FER_1"/>
    <property type="match status" value="2"/>
</dbReference>
<dbReference type="PROSITE" id="PS51379">
    <property type="entry name" value="4FE4S_FER_2"/>
    <property type="match status" value="2"/>
</dbReference>
<gene>
    <name type="primary">fadF</name>
    <name type="synonym">ywjF</name>
    <name type="ordered locus">BSU37180</name>
</gene>
<reference key="1">
    <citation type="journal article" date="1997" name="Microbiology">
        <title>The Bacillus subtilis genome from gerBC (311 degrees) to licR (334 degrees).</title>
        <authorList>
            <person name="Presecan E."/>
            <person name="Moszer I."/>
            <person name="Boursier L."/>
            <person name="Cruz Ramos H."/>
            <person name="De La Fuente V."/>
            <person name="Hullo M.-F."/>
            <person name="Lelong C."/>
            <person name="Schleich S."/>
            <person name="Sekowska A."/>
            <person name="Song B.H."/>
            <person name="Villani G."/>
            <person name="Kunst F."/>
            <person name="Danchin A."/>
            <person name="Glaser P."/>
        </authorList>
    </citation>
    <scope>NUCLEOTIDE SEQUENCE [GENOMIC DNA]</scope>
    <source>
        <strain>168</strain>
    </source>
</reference>
<reference key="2">
    <citation type="journal article" date="1997" name="Nature">
        <title>The complete genome sequence of the Gram-positive bacterium Bacillus subtilis.</title>
        <authorList>
            <person name="Kunst F."/>
            <person name="Ogasawara N."/>
            <person name="Moszer I."/>
            <person name="Albertini A.M."/>
            <person name="Alloni G."/>
            <person name="Azevedo V."/>
            <person name="Bertero M.G."/>
            <person name="Bessieres P."/>
            <person name="Bolotin A."/>
            <person name="Borchert S."/>
            <person name="Borriss R."/>
            <person name="Boursier L."/>
            <person name="Brans A."/>
            <person name="Braun M."/>
            <person name="Brignell S.C."/>
            <person name="Bron S."/>
            <person name="Brouillet S."/>
            <person name="Bruschi C.V."/>
            <person name="Caldwell B."/>
            <person name="Capuano V."/>
            <person name="Carter N.M."/>
            <person name="Choi S.-K."/>
            <person name="Codani J.-J."/>
            <person name="Connerton I.F."/>
            <person name="Cummings N.J."/>
            <person name="Daniel R.A."/>
            <person name="Denizot F."/>
            <person name="Devine K.M."/>
            <person name="Duesterhoeft A."/>
            <person name="Ehrlich S.D."/>
            <person name="Emmerson P.T."/>
            <person name="Entian K.-D."/>
            <person name="Errington J."/>
            <person name="Fabret C."/>
            <person name="Ferrari E."/>
            <person name="Foulger D."/>
            <person name="Fritz C."/>
            <person name="Fujita M."/>
            <person name="Fujita Y."/>
            <person name="Fuma S."/>
            <person name="Galizzi A."/>
            <person name="Galleron N."/>
            <person name="Ghim S.-Y."/>
            <person name="Glaser P."/>
            <person name="Goffeau A."/>
            <person name="Golightly E.J."/>
            <person name="Grandi G."/>
            <person name="Guiseppi G."/>
            <person name="Guy B.J."/>
            <person name="Haga K."/>
            <person name="Haiech J."/>
            <person name="Harwood C.R."/>
            <person name="Henaut A."/>
            <person name="Hilbert H."/>
            <person name="Holsappel S."/>
            <person name="Hosono S."/>
            <person name="Hullo M.-F."/>
            <person name="Itaya M."/>
            <person name="Jones L.-M."/>
            <person name="Joris B."/>
            <person name="Karamata D."/>
            <person name="Kasahara Y."/>
            <person name="Klaerr-Blanchard M."/>
            <person name="Klein C."/>
            <person name="Kobayashi Y."/>
            <person name="Koetter P."/>
            <person name="Koningstein G."/>
            <person name="Krogh S."/>
            <person name="Kumano M."/>
            <person name="Kurita K."/>
            <person name="Lapidus A."/>
            <person name="Lardinois S."/>
            <person name="Lauber J."/>
            <person name="Lazarevic V."/>
            <person name="Lee S.-M."/>
            <person name="Levine A."/>
            <person name="Liu H."/>
            <person name="Masuda S."/>
            <person name="Mauel C."/>
            <person name="Medigue C."/>
            <person name="Medina N."/>
            <person name="Mellado R.P."/>
            <person name="Mizuno M."/>
            <person name="Moestl D."/>
            <person name="Nakai S."/>
            <person name="Noback M."/>
            <person name="Noone D."/>
            <person name="O'Reilly M."/>
            <person name="Ogawa K."/>
            <person name="Ogiwara A."/>
            <person name="Oudega B."/>
            <person name="Park S.-H."/>
            <person name="Parro V."/>
            <person name="Pohl T.M."/>
            <person name="Portetelle D."/>
            <person name="Porwollik S."/>
            <person name="Prescott A.M."/>
            <person name="Presecan E."/>
            <person name="Pujic P."/>
            <person name="Purnelle B."/>
            <person name="Rapoport G."/>
            <person name="Rey M."/>
            <person name="Reynolds S."/>
            <person name="Rieger M."/>
            <person name="Rivolta C."/>
            <person name="Rocha E."/>
            <person name="Roche B."/>
            <person name="Rose M."/>
            <person name="Sadaie Y."/>
            <person name="Sato T."/>
            <person name="Scanlan E."/>
            <person name="Schleich S."/>
            <person name="Schroeter R."/>
            <person name="Scoffone F."/>
            <person name="Sekiguchi J."/>
            <person name="Sekowska A."/>
            <person name="Seror S.J."/>
            <person name="Serror P."/>
            <person name="Shin B.-S."/>
            <person name="Soldo B."/>
            <person name="Sorokin A."/>
            <person name="Tacconi E."/>
            <person name="Takagi T."/>
            <person name="Takahashi H."/>
            <person name="Takemaru K."/>
            <person name="Takeuchi M."/>
            <person name="Tamakoshi A."/>
            <person name="Tanaka T."/>
            <person name="Terpstra P."/>
            <person name="Tognoni A."/>
            <person name="Tosato V."/>
            <person name="Uchiyama S."/>
            <person name="Vandenbol M."/>
            <person name="Vannier F."/>
            <person name="Vassarotti A."/>
            <person name="Viari A."/>
            <person name="Wambutt R."/>
            <person name="Wedler E."/>
            <person name="Wedler H."/>
            <person name="Weitzenegger T."/>
            <person name="Winters P."/>
            <person name="Wipat A."/>
            <person name="Yamamoto H."/>
            <person name="Yamane K."/>
            <person name="Yasumoto K."/>
            <person name="Yata K."/>
            <person name="Yoshida K."/>
            <person name="Yoshikawa H.-F."/>
            <person name="Zumstein E."/>
            <person name="Yoshikawa H."/>
            <person name="Danchin A."/>
        </authorList>
    </citation>
    <scope>NUCLEOTIDE SEQUENCE [LARGE SCALE GENOMIC DNA]</scope>
    <source>
        <strain>168</strain>
    </source>
</reference>
<reference key="3">
    <citation type="journal article" date="2007" name="J. Biol. Chem.">
        <title>Organization and function of the YsiA regulon of Bacillus subtilis involved in fatty acid degradation.</title>
        <authorList>
            <person name="Matsuoka H."/>
            <person name="Hirooka K."/>
            <person name="Fujita Y."/>
        </authorList>
    </citation>
    <scope>GENE NAME</scope>
    <scope>INDUCTION</scope>
    <source>
        <strain>168</strain>
    </source>
</reference>
<evidence type="ECO:0000255" key="1"/>
<evidence type="ECO:0000255" key="2">
    <source>
        <dbReference type="PROSITE-ProRule" id="PRU00711"/>
    </source>
</evidence>
<evidence type="ECO:0000269" key="3">
    <source>
    </source>
</evidence>
<evidence type="ECO:0000305" key="4"/>
<accession>P45866</accession>
<protein>
    <recommendedName>
        <fullName evidence="4">Probable iron-sulfur-binding oxidoreductase FadF</fullName>
        <ecNumber evidence="4">1.-.-.-</ecNumber>
    </recommendedName>
</protein>
<keyword id="KW-0004">4Fe-4S</keyword>
<keyword id="KW-1003">Cell membrane</keyword>
<keyword id="KW-0408">Iron</keyword>
<keyword id="KW-0411">Iron-sulfur</keyword>
<keyword id="KW-0472">Membrane</keyword>
<keyword id="KW-0479">Metal-binding</keyword>
<keyword id="KW-0560">Oxidoreductase</keyword>
<keyword id="KW-1185">Reference proteome</keyword>
<keyword id="KW-0677">Repeat</keyword>
<keyword id="KW-0812">Transmembrane</keyword>
<keyword id="KW-1133">Transmembrane helix</keyword>